<dbReference type="EC" id="3.1.26.11" evidence="1"/>
<dbReference type="EMBL" id="CP001598">
    <property type="protein sequence ID" value="ACQ46237.1"/>
    <property type="molecule type" value="Genomic_DNA"/>
</dbReference>
<dbReference type="RefSeq" id="WP_000397440.1">
    <property type="nucleotide sequence ID" value="NC_012659.1"/>
</dbReference>
<dbReference type="SMR" id="C3P7S4"/>
<dbReference type="GeneID" id="45024027"/>
<dbReference type="KEGG" id="bai:BAA_4385"/>
<dbReference type="HOGENOM" id="CLU_031317_2_0_9"/>
<dbReference type="GO" id="GO:0042781">
    <property type="term" value="F:3'-tRNA processing endoribonuclease activity"/>
    <property type="evidence" value="ECO:0007669"/>
    <property type="project" value="UniProtKB-UniRule"/>
</dbReference>
<dbReference type="GO" id="GO:0008270">
    <property type="term" value="F:zinc ion binding"/>
    <property type="evidence" value="ECO:0007669"/>
    <property type="project" value="UniProtKB-UniRule"/>
</dbReference>
<dbReference type="CDD" id="cd07717">
    <property type="entry name" value="RNaseZ_ZiPD-like_MBL-fold"/>
    <property type="match status" value="1"/>
</dbReference>
<dbReference type="FunFam" id="3.60.15.10:FF:000002">
    <property type="entry name" value="Ribonuclease Z"/>
    <property type="match status" value="1"/>
</dbReference>
<dbReference type="Gene3D" id="3.60.15.10">
    <property type="entry name" value="Ribonuclease Z/Hydroxyacylglutathione hydrolase-like"/>
    <property type="match status" value="1"/>
</dbReference>
<dbReference type="HAMAP" id="MF_01818">
    <property type="entry name" value="RNase_Z_BN"/>
    <property type="match status" value="1"/>
</dbReference>
<dbReference type="InterPro" id="IPR001279">
    <property type="entry name" value="Metallo-B-lactamas"/>
</dbReference>
<dbReference type="InterPro" id="IPR036866">
    <property type="entry name" value="RibonucZ/Hydroxyglut_hydro"/>
</dbReference>
<dbReference type="InterPro" id="IPR013471">
    <property type="entry name" value="RNase_Z/BN"/>
</dbReference>
<dbReference type="NCBIfam" id="NF000800">
    <property type="entry name" value="PRK00055.1-1"/>
    <property type="match status" value="1"/>
</dbReference>
<dbReference type="NCBIfam" id="NF000801">
    <property type="entry name" value="PRK00055.1-3"/>
    <property type="match status" value="1"/>
</dbReference>
<dbReference type="NCBIfam" id="TIGR02651">
    <property type="entry name" value="RNase_Z"/>
    <property type="match status" value="1"/>
</dbReference>
<dbReference type="PANTHER" id="PTHR46018">
    <property type="entry name" value="ZINC PHOSPHODIESTERASE ELAC PROTEIN 1"/>
    <property type="match status" value="1"/>
</dbReference>
<dbReference type="PANTHER" id="PTHR46018:SF2">
    <property type="entry name" value="ZINC PHOSPHODIESTERASE ELAC PROTEIN 1"/>
    <property type="match status" value="1"/>
</dbReference>
<dbReference type="Pfam" id="PF00753">
    <property type="entry name" value="Lactamase_B"/>
    <property type="match status" value="1"/>
</dbReference>
<dbReference type="Pfam" id="PF12706">
    <property type="entry name" value="Lactamase_B_2"/>
    <property type="match status" value="1"/>
</dbReference>
<dbReference type="SMART" id="SM00849">
    <property type="entry name" value="Lactamase_B"/>
    <property type="match status" value="1"/>
</dbReference>
<dbReference type="SUPFAM" id="SSF56281">
    <property type="entry name" value="Metallo-hydrolase/oxidoreductase"/>
    <property type="match status" value="1"/>
</dbReference>
<evidence type="ECO:0000255" key="1">
    <source>
        <dbReference type="HAMAP-Rule" id="MF_01818"/>
    </source>
</evidence>
<feature type="chain" id="PRO_1000187928" description="Ribonuclease Z">
    <location>
        <begin position="1"/>
        <end position="307"/>
    </location>
</feature>
<feature type="active site" description="Proton acceptor" evidence="1">
    <location>
        <position position="67"/>
    </location>
</feature>
<feature type="binding site" evidence="1">
    <location>
        <position position="63"/>
    </location>
    <ligand>
        <name>Zn(2+)</name>
        <dbReference type="ChEBI" id="CHEBI:29105"/>
        <label>1</label>
        <note>catalytic</note>
    </ligand>
</feature>
<feature type="binding site" evidence="1">
    <location>
        <position position="65"/>
    </location>
    <ligand>
        <name>Zn(2+)</name>
        <dbReference type="ChEBI" id="CHEBI:29105"/>
        <label>1</label>
        <note>catalytic</note>
    </ligand>
</feature>
<feature type="binding site" evidence="1">
    <location>
        <position position="67"/>
    </location>
    <ligand>
        <name>Zn(2+)</name>
        <dbReference type="ChEBI" id="CHEBI:29105"/>
        <label>2</label>
        <note>catalytic</note>
    </ligand>
</feature>
<feature type="binding site" evidence="1">
    <location>
        <position position="68"/>
    </location>
    <ligand>
        <name>Zn(2+)</name>
        <dbReference type="ChEBI" id="CHEBI:29105"/>
        <label>2</label>
        <note>catalytic</note>
    </ligand>
</feature>
<feature type="binding site" evidence="1">
    <location>
        <position position="141"/>
    </location>
    <ligand>
        <name>Zn(2+)</name>
        <dbReference type="ChEBI" id="CHEBI:29105"/>
        <label>1</label>
        <note>catalytic</note>
    </ligand>
</feature>
<feature type="binding site" evidence="1">
    <location>
        <position position="212"/>
    </location>
    <ligand>
        <name>Zn(2+)</name>
        <dbReference type="ChEBI" id="CHEBI:29105"/>
        <label>1</label>
        <note>catalytic</note>
    </ligand>
</feature>
<feature type="binding site" evidence="1">
    <location>
        <position position="212"/>
    </location>
    <ligand>
        <name>Zn(2+)</name>
        <dbReference type="ChEBI" id="CHEBI:29105"/>
        <label>2</label>
        <note>catalytic</note>
    </ligand>
</feature>
<feature type="binding site" evidence="1">
    <location>
        <position position="270"/>
    </location>
    <ligand>
        <name>Zn(2+)</name>
        <dbReference type="ChEBI" id="CHEBI:29105"/>
        <label>2</label>
        <note>catalytic</note>
    </ligand>
</feature>
<comment type="function">
    <text evidence="1">Zinc phosphodiesterase, which displays some tRNA 3'-processing endonuclease activity. Probably involved in tRNA maturation, by removing a 3'-trailer from precursor tRNA.</text>
</comment>
<comment type="catalytic activity">
    <reaction evidence="1">
        <text>Endonucleolytic cleavage of RNA, removing extra 3' nucleotides from tRNA precursor, generating 3' termini of tRNAs. A 3'-hydroxy group is left at the tRNA terminus and a 5'-phosphoryl group is left at the trailer molecule.</text>
        <dbReference type="EC" id="3.1.26.11"/>
    </reaction>
</comment>
<comment type="cofactor">
    <cofactor evidence="1">
        <name>Zn(2+)</name>
        <dbReference type="ChEBI" id="CHEBI:29105"/>
    </cofactor>
    <text evidence="1">Binds 2 Zn(2+) ions.</text>
</comment>
<comment type="subunit">
    <text evidence="1">Homodimer.</text>
</comment>
<comment type="similarity">
    <text evidence="1">Belongs to the RNase Z family.</text>
</comment>
<accession>C3P7S4</accession>
<reference key="1">
    <citation type="submission" date="2009-04" db="EMBL/GenBank/DDBJ databases">
        <title>Genome sequence of Bacillus anthracis A0248.</title>
        <authorList>
            <person name="Dodson R.J."/>
            <person name="Munk A.C."/>
            <person name="Bruce D."/>
            <person name="Detter C."/>
            <person name="Tapia R."/>
            <person name="Sutton G."/>
            <person name="Sims D."/>
            <person name="Brettin T."/>
        </authorList>
    </citation>
    <scope>NUCLEOTIDE SEQUENCE [LARGE SCALE GENOMIC DNA]</scope>
    <source>
        <strain>A0248</strain>
    </source>
</reference>
<proteinExistence type="inferred from homology"/>
<organism>
    <name type="scientific">Bacillus anthracis (strain A0248)</name>
    <dbReference type="NCBI Taxonomy" id="592021"/>
    <lineage>
        <taxon>Bacteria</taxon>
        <taxon>Bacillati</taxon>
        <taxon>Bacillota</taxon>
        <taxon>Bacilli</taxon>
        <taxon>Bacillales</taxon>
        <taxon>Bacillaceae</taxon>
        <taxon>Bacillus</taxon>
        <taxon>Bacillus cereus group</taxon>
    </lineage>
</organism>
<sequence>MEFVFLGTGAGVPSKGRNVSAIALQLLEERGQTWLFDCGEATQHQILHTSVRPRRIEKIFITHLHGDHIFGLPGLLGSRSFQGGTTPLTVYGPKGIKQFIEVALSVSTTHVKYPLEIVEITEEGTVFEDNEFHVETKRLSHGIECFGYRIIEKDIQGALLVDKLLEIGVKPGPLFKRLKDGEVVELENGTILNGNDFIGPPQKGRVITILGDTRYCEASRELAQDADVLVHEATFAAEDEQQAYDYFHSTSKQAASIALQANAKRLILTHISSRYQGDTYKELLKEARELFSNTEIATDLKSFPVDR</sequence>
<keyword id="KW-0255">Endonuclease</keyword>
<keyword id="KW-0378">Hydrolase</keyword>
<keyword id="KW-0479">Metal-binding</keyword>
<keyword id="KW-0540">Nuclease</keyword>
<keyword id="KW-0819">tRNA processing</keyword>
<keyword id="KW-0862">Zinc</keyword>
<protein>
    <recommendedName>
        <fullName evidence="1">Ribonuclease Z</fullName>
        <shortName evidence="1">RNase Z</shortName>
        <ecNumber evidence="1">3.1.26.11</ecNumber>
    </recommendedName>
    <alternativeName>
        <fullName evidence="1">tRNA 3 endonuclease</fullName>
    </alternativeName>
    <alternativeName>
        <fullName evidence="1">tRNase Z</fullName>
    </alternativeName>
</protein>
<gene>
    <name evidence="1" type="primary">rnz</name>
    <name type="ordered locus">BAA_4385</name>
</gene>
<name>RNZ_BACAA</name>